<comment type="function">
    <text evidence="1">Catalyzes the synthesis of alpha-ribazole-5'-phosphate from nicotinate mononucleotide (NAMN) and 5,6-dimethylbenzimidazole (DMB).</text>
</comment>
<comment type="catalytic activity">
    <reaction evidence="1">
        <text>5,6-dimethylbenzimidazole + nicotinate beta-D-ribonucleotide = alpha-ribazole 5'-phosphate + nicotinate + H(+)</text>
        <dbReference type="Rhea" id="RHEA:11196"/>
        <dbReference type="ChEBI" id="CHEBI:15378"/>
        <dbReference type="ChEBI" id="CHEBI:15890"/>
        <dbReference type="ChEBI" id="CHEBI:32544"/>
        <dbReference type="ChEBI" id="CHEBI:57502"/>
        <dbReference type="ChEBI" id="CHEBI:57918"/>
        <dbReference type="EC" id="2.4.2.21"/>
    </reaction>
</comment>
<comment type="pathway">
    <text evidence="1">Nucleoside biosynthesis; alpha-ribazole biosynthesis; alpha-ribazole from 5,6-dimethylbenzimidazole: step 1/2.</text>
</comment>
<comment type="similarity">
    <text evidence="1">Belongs to the CobT family.</text>
</comment>
<name>COBT_RALN1</name>
<sequence length="354" mass="36092">MHTDISSFDPALAARLRAAVDSKTKPLGALGRLESLAVQIGLIQDTEAPVLIRPAMVVFAADHGVAQAGVSAYPQAVTAQMVLNFIAGGAAVNVFCRQHGFALEIVNAGVAMPLWSLGVPGLIDAPIGAGTRNFAHEPAMTAAERDRAMALGAQRVAAHAELGSNVIALGEMGIGNTASAACLMARLCDLPLAQCVGRGAGLDDAGLARKCAVLEAALAAHADARAPLDALACFGGFEIAAMAGAMLEAARRRMVILVDGFIASAAALVATRVAPEVQRFCVFAHLSDEHGHRALLAALGAEPLLQLSMRLGEGSGAVLAYPLVVSAVAFLREMATFASAGVSEQAPPALDPAA</sequence>
<evidence type="ECO:0000255" key="1">
    <source>
        <dbReference type="HAMAP-Rule" id="MF_00230"/>
    </source>
</evidence>
<keyword id="KW-0169">Cobalamin biosynthesis</keyword>
<keyword id="KW-0328">Glycosyltransferase</keyword>
<keyword id="KW-1185">Reference proteome</keyword>
<keyword id="KW-0808">Transferase</keyword>
<accession>Q8XWS3</accession>
<protein>
    <recommendedName>
        <fullName evidence="1">Nicotinate-nucleotide--dimethylbenzimidazole phosphoribosyltransferase</fullName>
        <shortName evidence="1">NN:DBI PRT</shortName>
        <ecNumber evidence="1">2.4.2.21</ecNumber>
    </recommendedName>
    <alternativeName>
        <fullName evidence="1">N(1)-alpha-phosphoribosyltransferase</fullName>
    </alternativeName>
</protein>
<feature type="chain" id="PRO_0000167064" description="Nicotinate-nucleotide--dimethylbenzimidazole phosphoribosyltransferase">
    <location>
        <begin position="1"/>
        <end position="354"/>
    </location>
</feature>
<feature type="active site" description="Proton acceptor" evidence="1">
    <location>
        <position position="313"/>
    </location>
</feature>
<proteinExistence type="inferred from homology"/>
<gene>
    <name evidence="1" type="primary">cobT</name>
    <name type="synonym">cobU</name>
    <name type="ordered locus">RSc2397</name>
    <name type="ORF">RS02725</name>
</gene>
<organism>
    <name type="scientific">Ralstonia nicotianae (strain ATCC BAA-1114 / GMI1000)</name>
    <name type="common">Ralstonia solanacearum</name>
    <dbReference type="NCBI Taxonomy" id="267608"/>
    <lineage>
        <taxon>Bacteria</taxon>
        <taxon>Pseudomonadati</taxon>
        <taxon>Pseudomonadota</taxon>
        <taxon>Betaproteobacteria</taxon>
        <taxon>Burkholderiales</taxon>
        <taxon>Burkholderiaceae</taxon>
        <taxon>Ralstonia</taxon>
        <taxon>Ralstonia solanacearum species complex</taxon>
    </lineage>
</organism>
<reference key="1">
    <citation type="journal article" date="2002" name="Nature">
        <title>Genome sequence of the plant pathogen Ralstonia solanacearum.</title>
        <authorList>
            <person name="Salanoubat M."/>
            <person name="Genin S."/>
            <person name="Artiguenave F."/>
            <person name="Gouzy J."/>
            <person name="Mangenot S."/>
            <person name="Arlat M."/>
            <person name="Billault A."/>
            <person name="Brottier P."/>
            <person name="Camus J.-C."/>
            <person name="Cattolico L."/>
            <person name="Chandler M."/>
            <person name="Choisne N."/>
            <person name="Claudel-Renard C."/>
            <person name="Cunnac S."/>
            <person name="Demange N."/>
            <person name="Gaspin C."/>
            <person name="Lavie M."/>
            <person name="Moisan A."/>
            <person name="Robert C."/>
            <person name="Saurin W."/>
            <person name="Schiex T."/>
            <person name="Siguier P."/>
            <person name="Thebault P."/>
            <person name="Whalen M."/>
            <person name="Wincker P."/>
            <person name="Levy M."/>
            <person name="Weissenbach J."/>
            <person name="Boucher C.A."/>
        </authorList>
    </citation>
    <scope>NUCLEOTIDE SEQUENCE [LARGE SCALE GENOMIC DNA]</scope>
    <source>
        <strain>ATCC BAA-1114 / GMI1000</strain>
    </source>
</reference>
<dbReference type="EC" id="2.4.2.21" evidence="1"/>
<dbReference type="EMBL" id="AL646052">
    <property type="protein sequence ID" value="CAD16104.1"/>
    <property type="molecule type" value="Genomic_DNA"/>
</dbReference>
<dbReference type="RefSeq" id="WP_011002320.1">
    <property type="nucleotide sequence ID" value="NC_003295.1"/>
</dbReference>
<dbReference type="SMR" id="Q8XWS3"/>
<dbReference type="STRING" id="267608.RSc2397"/>
<dbReference type="EnsemblBacteria" id="CAD16104">
    <property type="protein sequence ID" value="CAD16104"/>
    <property type="gene ID" value="RSc2397"/>
</dbReference>
<dbReference type="KEGG" id="rso:RSc2397"/>
<dbReference type="eggNOG" id="COG2038">
    <property type="taxonomic scope" value="Bacteria"/>
</dbReference>
<dbReference type="HOGENOM" id="CLU_002982_0_0_4"/>
<dbReference type="UniPathway" id="UPA00061">
    <property type="reaction ID" value="UER00516"/>
</dbReference>
<dbReference type="Proteomes" id="UP000001436">
    <property type="component" value="Chromosome"/>
</dbReference>
<dbReference type="GO" id="GO:0008939">
    <property type="term" value="F:nicotinate-nucleotide-dimethylbenzimidazole phosphoribosyltransferase activity"/>
    <property type="evidence" value="ECO:0007669"/>
    <property type="project" value="UniProtKB-UniRule"/>
</dbReference>
<dbReference type="GO" id="GO:0009236">
    <property type="term" value="P:cobalamin biosynthetic process"/>
    <property type="evidence" value="ECO:0007669"/>
    <property type="project" value="UniProtKB-KW"/>
</dbReference>
<dbReference type="CDD" id="cd02439">
    <property type="entry name" value="DMB-PRT_CobT"/>
    <property type="match status" value="1"/>
</dbReference>
<dbReference type="FunFam" id="3.40.50.10210:FF:000001">
    <property type="entry name" value="Nicotinate-nucleotide--dimethylbenzimidazole phosphoribosyltransferase"/>
    <property type="match status" value="1"/>
</dbReference>
<dbReference type="Gene3D" id="1.10.1610.10">
    <property type="match status" value="1"/>
</dbReference>
<dbReference type="Gene3D" id="3.40.50.10210">
    <property type="match status" value="1"/>
</dbReference>
<dbReference type="HAMAP" id="MF_00230">
    <property type="entry name" value="CobT"/>
    <property type="match status" value="1"/>
</dbReference>
<dbReference type="InterPro" id="IPR003200">
    <property type="entry name" value="Nict_dMeBzImd_PRibTrfase"/>
</dbReference>
<dbReference type="InterPro" id="IPR017846">
    <property type="entry name" value="Nict_dMeBzImd_PRibTrfase_bact"/>
</dbReference>
<dbReference type="InterPro" id="IPR023195">
    <property type="entry name" value="Nict_dMeBzImd_PRibTrfase_N"/>
</dbReference>
<dbReference type="InterPro" id="IPR036087">
    <property type="entry name" value="Nict_dMeBzImd_PRibTrfase_sf"/>
</dbReference>
<dbReference type="NCBIfam" id="TIGR03160">
    <property type="entry name" value="cobT_DBIPRT"/>
    <property type="match status" value="1"/>
</dbReference>
<dbReference type="NCBIfam" id="NF000996">
    <property type="entry name" value="PRK00105.1"/>
    <property type="match status" value="1"/>
</dbReference>
<dbReference type="PANTHER" id="PTHR43463">
    <property type="entry name" value="NICOTINATE-NUCLEOTIDE--DIMETHYLBENZIMIDAZOLE PHOSPHORIBOSYLTRANSFERASE"/>
    <property type="match status" value="1"/>
</dbReference>
<dbReference type="PANTHER" id="PTHR43463:SF1">
    <property type="entry name" value="NICOTINATE-NUCLEOTIDE--DIMETHYLBENZIMIDAZOLE PHOSPHORIBOSYLTRANSFERASE"/>
    <property type="match status" value="1"/>
</dbReference>
<dbReference type="Pfam" id="PF02277">
    <property type="entry name" value="DBI_PRT"/>
    <property type="match status" value="1"/>
</dbReference>
<dbReference type="SUPFAM" id="SSF52733">
    <property type="entry name" value="Nicotinate mononucleotide:5,6-dimethylbenzimidazole phosphoribosyltransferase (CobT)"/>
    <property type="match status" value="1"/>
</dbReference>